<protein>
    <recommendedName>
        <fullName>Neuronal acetylcholine receptor subunit beta-2</fullName>
    </recommendedName>
</protein>
<name>ACHB2_MOUSE</name>
<organism>
    <name type="scientific">Mus musculus</name>
    <name type="common">Mouse</name>
    <dbReference type="NCBI Taxonomy" id="10090"/>
    <lineage>
        <taxon>Eukaryota</taxon>
        <taxon>Metazoa</taxon>
        <taxon>Chordata</taxon>
        <taxon>Craniata</taxon>
        <taxon>Vertebrata</taxon>
        <taxon>Euteleostomi</taxon>
        <taxon>Mammalia</taxon>
        <taxon>Eutheria</taxon>
        <taxon>Euarchontoglires</taxon>
        <taxon>Glires</taxon>
        <taxon>Rodentia</taxon>
        <taxon>Myomorpha</taxon>
        <taxon>Muroidea</taxon>
        <taxon>Muridae</taxon>
        <taxon>Murinae</taxon>
        <taxon>Mus</taxon>
        <taxon>Mus</taxon>
    </lineage>
</organism>
<proteinExistence type="evidence at transcript level"/>
<feature type="signal peptide" evidence="4">
    <location>
        <begin position="1"/>
        <end position="25"/>
    </location>
</feature>
<feature type="chain" id="PRO_0000000380" description="Neuronal acetylcholine receptor subunit beta-2">
    <location>
        <begin position="26"/>
        <end position="501"/>
    </location>
</feature>
<feature type="topological domain" description="Extracellular" evidence="4">
    <location>
        <begin position="26"/>
        <end position="238"/>
    </location>
</feature>
<feature type="transmembrane region" description="Helical" evidence="4">
    <location>
        <begin position="239"/>
        <end position="259"/>
    </location>
</feature>
<feature type="topological domain" description="Cytoplasmic" evidence="4">
    <location>
        <begin position="260"/>
        <end position="267"/>
    </location>
</feature>
<feature type="transmembrane region" description="Helical" evidence="4">
    <location>
        <begin position="268"/>
        <end position="288"/>
    </location>
</feature>
<feature type="topological domain" description="Extracellular" evidence="4">
    <location>
        <begin position="289"/>
        <end position="300"/>
    </location>
</feature>
<feature type="transmembrane region" description="Helical" evidence="4">
    <location>
        <begin position="301"/>
        <end position="321"/>
    </location>
</feature>
<feature type="topological domain" description="Cytoplasmic" evidence="4">
    <location>
        <begin position="322"/>
        <end position="459"/>
    </location>
</feature>
<feature type="transmembrane region" description="Helical" evidence="4">
    <location>
        <begin position="460"/>
        <end position="480"/>
    </location>
</feature>
<feature type="site" description="Key residue that may interfere with effective access of the conotoxin BuIA to the channel binding site" evidence="2">
    <location>
        <position position="84"/>
    </location>
</feature>
<feature type="site" description="Key residue for a rapid dissociation (K(off)) from the conotoxin BuIA" evidence="2">
    <location>
        <position position="136"/>
    </location>
</feature>
<feature type="site" description="Key residue for a rapid dissociation (K(off)) from the conotoxin BuIA" evidence="2">
    <location>
        <position position="144"/>
    </location>
</feature>
<feature type="glycosylation site" description="N-linked (GlcNAc...) asparagine" evidence="4">
    <location>
        <position position="51"/>
    </location>
</feature>
<feature type="glycosylation site" description="N-linked (GlcNAc...) asparagine" evidence="4">
    <location>
        <position position="168"/>
    </location>
</feature>
<feature type="disulfide bond" evidence="3">
    <location>
        <begin position="155"/>
        <end position="169"/>
    </location>
</feature>
<feature type="sequence conflict" description="In Ref. 1; AAG23697." evidence="5" ref="1">
    <original>E</original>
    <variation>K</variation>
    <location>
        <position position="380"/>
    </location>
</feature>
<gene>
    <name type="primary">Chrnb2</name>
</gene>
<keyword id="KW-1003">Cell membrane</keyword>
<keyword id="KW-1015">Disulfide bond</keyword>
<keyword id="KW-0325">Glycoprotein</keyword>
<keyword id="KW-0407">Ion channel</keyword>
<keyword id="KW-0406">Ion transport</keyword>
<keyword id="KW-1071">Ligand-gated ion channel</keyword>
<keyword id="KW-0472">Membrane</keyword>
<keyword id="KW-0675">Receptor</keyword>
<keyword id="KW-1185">Reference proteome</keyword>
<keyword id="KW-0732">Signal</keyword>
<keyword id="KW-0770">Synapse</keyword>
<keyword id="KW-0812">Transmembrane</keyword>
<keyword id="KW-1133">Transmembrane helix</keyword>
<keyword id="KW-0813">Transport</keyword>
<dbReference type="EMBL" id="AF299083">
    <property type="protein sequence ID" value="AAG23697.1"/>
    <property type="molecule type" value="mRNA"/>
</dbReference>
<dbReference type="EMBL" id="AY574267">
    <property type="protein sequence ID" value="AAS90363.1"/>
    <property type="molecule type" value="mRNA"/>
</dbReference>
<dbReference type="EMBL" id="AK049722">
    <property type="protein sequence ID" value="BAC33893.1"/>
    <property type="molecule type" value="mRNA"/>
</dbReference>
<dbReference type="EMBL" id="AK051742">
    <property type="protein sequence ID" value="BAC34749.1"/>
    <property type="molecule type" value="mRNA"/>
</dbReference>
<dbReference type="EMBL" id="AC102392">
    <property type="status" value="NOT_ANNOTATED_CDS"/>
    <property type="molecule type" value="Genomic_DNA"/>
</dbReference>
<dbReference type="EMBL" id="CH466547">
    <property type="protein sequence ID" value="EDL15184.1"/>
    <property type="molecule type" value="Genomic_DNA"/>
</dbReference>
<dbReference type="EMBL" id="BC065103">
    <property type="protein sequence ID" value="AAH65103.1"/>
    <property type="molecule type" value="mRNA"/>
</dbReference>
<dbReference type="CCDS" id="CCDS17515.1"/>
<dbReference type="RefSeq" id="NP_033732.2">
    <property type="nucleotide sequence ID" value="NM_009602.4"/>
</dbReference>
<dbReference type="SMR" id="Q9ERK7"/>
<dbReference type="ComplexPortal" id="CPX-167">
    <property type="entry name" value="Neuronal nicotinic acetylcholine receptor complex, 3xalpha4-2xbeta2"/>
</dbReference>
<dbReference type="ComplexPortal" id="CPX-169">
    <property type="entry name" value="Neuronal nicotinic acetylcholine receptor complex, 2xalpha4-3xbeta2"/>
</dbReference>
<dbReference type="ComplexPortal" id="CPX-174">
    <property type="entry name" value="Neuronal nicotinic acetylcholine receptor complex, alpha2-beta2"/>
</dbReference>
<dbReference type="ComplexPortal" id="CPX-188">
    <property type="entry name" value="Neuronal nicotinic acetylcholine receptor complex, alpha3-alpha5-beta2"/>
</dbReference>
<dbReference type="ComplexPortal" id="CPX-189">
    <property type="entry name" value="Neuronal nicotinic acetylcholine receptor complex, alpha3-beta2"/>
</dbReference>
<dbReference type="ComplexPortal" id="CPX-202">
    <property type="entry name" value="Neuronal nicotinic acetylcholine receptor complex, alpha3-alpha6-beta2-beta3"/>
</dbReference>
<dbReference type="ComplexPortal" id="CPX-216">
    <property type="entry name" value="Neuronal nicotinic acetylcholine receptor complex, alpha4-alpha5-beta2"/>
</dbReference>
<dbReference type="ComplexPortal" id="CPX-238">
    <property type="entry name" value="Neuronal nicotinic acetylcholine receptor complex, alpha7-beta2"/>
</dbReference>
<dbReference type="DIP" id="DIP-48730N"/>
<dbReference type="FunCoup" id="Q9ERK7">
    <property type="interactions" value="509"/>
</dbReference>
<dbReference type="IntAct" id="Q9ERK7">
    <property type="interactions" value="4"/>
</dbReference>
<dbReference type="STRING" id="10090.ENSMUSP00000029562"/>
<dbReference type="BindingDB" id="Q9ERK7"/>
<dbReference type="ChEMBL" id="CHEMBL3301382"/>
<dbReference type="ChEMBL" id="CHEMBL3883314"/>
<dbReference type="ChEMBL" id="CHEMBL3885610"/>
<dbReference type="ChEMBL" id="CHEMBL3885611"/>
<dbReference type="GlyCosmos" id="Q9ERK7">
    <property type="glycosylation" value="2 sites, No reported glycans"/>
</dbReference>
<dbReference type="GlyGen" id="Q9ERK7">
    <property type="glycosylation" value="2 sites, 1 N-linked glycan (1 site)"/>
</dbReference>
<dbReference type="iPTMnet" id="Q9ERK7"/>
<dbReference type="PhosphoSitePlus" id="Q9ERK7"/>
<dbReference type="PaxDb" id="10090-ENSMUSP00000029562"/>
<dbReference type="ProteomicsDB" id="285921"/>
<dbReference type="Antibodypedia" id="20401">
    <property type="antibodies" value="263 antibodies from 33 providers"/>
</dbReference>
<dbReference type="DNASU" id="11444"/>
<dbReference type="Ensembl" id="ENSMUST00000029562.5">
    <property type="protein sequence ID" value="ENSMUSP00000029562.4"/>
    <property type="gene ID" value="ENSMUSG00000027950.8"/>
</dbReference>
<dbReference type="GeneID" id="11444"/>
<dbReference type="KEGG" id="mmu:11444"/>
<dbReference type="UCSC" id="uc008qaa.2">
    <property type="organism name" value="mouse"/>
</dbReference>
<dbReference type="AGR" id="MGI:87891"/>
<dbReference type="CTD" id="1141"/>
<dbReference type="MGI" id="MGI:87891">
    <property type="gene designation" value="Chrnb2"/>
</dbReference>
<dbReference type="VEuPathDB" id="HostDB:ENSMUSG00000027950"/>
<dbReference type="eggNOG" id="KOG3645">
    <property type="taxonomic scope" value="Eukaryota"/>
</dbReference>
<dbReference type="GeneTree" id="ENSGT00940000158417"/>
<dbReference type="HOGENOM" id="CLU_018074_1_0_1"/>
<dbReference type="InParanoid" id="Q9ERK7"/>
<dbReference type="OMA" id="MAWRSGP"/>
<dbReference type="OrthoDB" id="34769at9989"/>
<dbReference type="PhylomeDB" id="Q9ERK7"/>
<dbReference type="TreeFam" id="TF315605"/>
<dbReference type="Reactome" id="R-MMU-629587">
    <property type="pathway name" value="Highly sodium permeable postsynaptic acetylcholine nicotinic receptors"/>
</dbReference>
<dbReference type="Reactome" id="R-MMU-629594">
    <property type="pathway name" value="Highly calcium permeable postsynaptic nicotinic acetylcholine receptors"/>
</dbReference>
<dbReference type="Reactome" id="R-MMU-629597">
    <property type="pathway name" value="Highly calcium permeable nicotinic acetylcholine receptors"/>
</dbReference>
<dbReference type="BioGRID-ORCS" id="11444">
    <property type="hits" value="0 hits in 77 CRISPR screens"/>
</dbReference>
<dbReference type="PRO" id="PR:Q9ERK7"/>
<dbReference type="Proteomes" id="UP000000589">
    <property type="component" value="Chromosome 3"/>
</dbReference>
<dbReference type="RNAct" id="Q9ERK7">
    <property type="molecule type" value="protein"/>
</dbReference>
<dbReference type="Bgee" id="ENSMUSG00000027950">
    <property type="expression patterns" value="Expressed in medial dorsal nucleus of thalamus and 190 other cell types or tissues"/>
</dbReference>
<dbReference type="ExpressionAtlas" id="Q9ERK7">
    <property type="expression patterns" value="baseline and differential"/>
</dbReference>
<dbReference type="GO" id="GO:0005892">
    <property type="term" value="C:acetylcholine-gated channel complex"/>
    <property type="evidence" value="ECO:0000314"/>
    <property type="project" value="MGI"/>
</dbReference>
<dbReference type="GO" id="GO:0098981">
    <property type="term" value="C:cholinergic synapse"/>
    <property type="evidence" value="ECO:0000314"/>
    <property type="project" value="SynGO"/>
</dbReference>
<dbReference type="GO" id="GO:0098691">
    <property type="term" value="C:dopaminergic synapse"/>
    <property type="evidence" value="ECO:0000314"/>
    <property type="project" value="SynGO"/>
</dbReference>
<dbReference type="GO" id="GO:0009897">
    <property type="term" value="C:external side of plasma membrane"/>
    <property type="evidence" value="ECO:0000314"/>
    <property type="project" value="MGI"/>
</dbReference>
<dbReference type="GO" id="GO:0005886">
    <property type="term" value="C:plasma membrane"/>
    <property type="evidence" value="ECO:0000314"/>
    <property type="project" value="MGI"/>
</dbReference>
<dbReference type="GO" id="GO:0099634">
    <property type="term" value="C:postsynaptic specialization membrane"/>
    <property type="evidence" value="ECO:0000314"/>
    <property type="project" value="SynGO"/>
</dbReference>
<dbReference type="GO" id="GO:0042734">
    <property type="term" value="C:presynaptic membrane"/>
    <property type="evidence" value="ECO:0000314"/>
    <property type="project" value="SynGO"/>
</dbReference>
<dbReference type="GO" id="GO:0022848">
    <property type="term" value="F:acetylcholine-gated monoatomic cation-selective channel activity"/>
    <property type="evidence" value="ECO:0000314"/>
    <property type="project" value="MGI"/>
</dbReference>
<dbReference type="GO" id="GO:0004888">
    <property type="term" value="F:transmembrane signaling receptor activity"/>
    <property type="evidence" value="ECO:0007669"/>
    <property type="project" value="InterPro"/>
</dbReference>
<dbReference type="GO" id="GO:1904315">
    <property type="term" value="F:transmitter-gated monoatomic ion channel activity involved in regulation of postsynaptic membrane potential"/>
    <property type="evidence" value="ECO:0000314"/>
    <property type="project" value="SynGO"/>
</dbReference>
<dbReference type="GO" id="GO:0095500">
    <property type="term" value="P:acetylcholine receptor signaling pathway"/>
    <property type="evidence" value="ECO:0000314"/>
    <property type="project" value="MGI"/>
</dbReference>
<dbReference type="GO" id="GO:0001508">
    <property type="term" value="P:action potential"/>
    <property type="evidence" value="ECO:0000315"/>
    <property type="project" value="MGI"/>
</dbReference>
<dbReference type="GO" id="GO:0008306">
    <property type="term" value="P:associative learning"/>
    <property type="evidence" value="ECO:0000316"/>
    <property type="project" value="MGI"/>
</dbReference>
<dbReference type="GO" id="GO:0042113">
    <property type="term" value="P:B cell activation"/>
    <property type="evidence" value="ECO:0000315"/>
    <property type="project" value="MGI"/>
</dbReference>
<dbReference type="GO" id="GO:0042100">
    <property type="term" value="P:B cell proliferation"/>
    <property type="evidence" value="ECO:0000316"/>
    <property type="project" value="MGI"/>
</dbReference>
<dbReference type="GO" id="GO:0035095">
    <property type="term" value="P:behavioral response to nicotine"/>
    <property type="evidence" value="ECO:0000315"/>
    <property type="project" value="MGI"/>
</dbReference>
<dbReference type="GO" id="GO:0006816">
    <property type="term" value="P:calcium ion transport"/>
    <property type="evidence" value="ECO:0000316"/>
    <property type="project" value="MGI"/>
</dbReference>
<dbReference type="GO" id="GO:0021955">
    <property type="term" value="P:central nervous system neuron axonogenesis"/>
    <property type="evidence" value="ECO:0000315"/>
    <property type="project" value="MGI"/>
</dbReference>
<dbReference type="GO" id="GO:0021952">
    <property type="term" value="P:central nervous system projection neuron axonogenesis"/>
    <property type="evidence" value="ECO:0000315"/>
    <property type="project" value="MGI"/>
</dbReference>
<dbReference type="GO" id="GO:0001661">
    <property type="term" value="P:conditioned taste aversion"/>
    <property type="evidence" value="ECO:0000315"/>
    <property type="project" value="MGI"/>
</dbReference>
<dbReference type="GO" id="GO:0014046">
    <property type="term" value="P:dopamine secretion"/>
    <property type="evidence" value="ECO:0000315"/>
    <property type="project" value="MGI"/>
</dbReference>
<dbReference type="GO" id="GO:0051649">
    <property type="term" value="P:establishment of localization in cell"/>
    <property type="evidence" value="ECO:0000315"/>
    <property type="project" value="MGI"/>
</dbReference>
<dbReference type="GO" id="GO:0021771">
    <property type="term" value="P:lateral geniculate nucleus development"/>
    <property type="evidence" value="ECO:0000315"/>
    <property type="project" value="MGI"/>
</dbReference>
<dbReference type="GO" id="GO:0007612">
    <property type="term" value="P:learning"/>
    <property type="evidence" value="ECO:0000315"/>
    <property type="project" value="MGI"/>
</dbReference>
<dbReference type="GO" id="GO:0007626">
    <property type="term" value="P:locomotory behavior"/>
    <property type="evidence" value="ECO:0000315"/>
    <property type="project" value="MGI"/>
</dbReference>
<dbReference type="GO" id="GO:0051899">
    <property type="term" value="P:membrane depolarization"/>
    <property type="evidence" value="ECO:0000315"/>
    <property type="project" value="MGI"/>
</dbReference>
<dbReference type="GO" id="GO:0007613">
    <property type="term" value="P:memory"/>
    <property type="evidence" value="ECO:0000315"/>
    <property type="project" value="MGI"/>
</dbReference>
<dbReference type="GO" id="GO:1904456">
    <property type="term" value="P:negative regulation of neuronal action potential"/>
    <property type="evidence" value="ECO:0000315"/>
    <property type="project" value="MGI"/>
</dbReference>
<dbReference type="GO" id="GO:0019228">
    <property type="term" value="P:neuronal action potential"/>
    <property type="evidence" value="ECO:0000315"/>
    <property type="project" value="MGI"/>
</dbReference>
<dbReference type="GO" id="GO:0021631">
    <property type="term" value="P:optic nerve morphogenesis"/>
    <property type="evidence" value="ECO:0000315"/>
    <property type="project" value="MGI"/>
</dbReference>
<dbReference type="GO" id="GO:0030890">
    <property type="term" value="P:positive regulation of B cell proliferation"/>
    <property type="evidence" value="ECO:0000316"/>
    <property type="project" value="MGI"/>
</dbReference>
<dbReference type="GO" id="GO:0033603">
    <property type="term" value="P:positive regulation of dopamine secretion"/>
    <property type="evidence" value="ECO:0000315"/>
    <property type="project" value="MGI"/>
</dbReference>
<dbReference type="GO" id="GO:0032226">
    <property type="term" value="P:positive regulation of synaptic transmission, dopaminergic"/>
    <property type="evidence" value="ECO:0000315"/>
    <property type="project" value="MGI"/>
</dbReference>
<dbReference type="GO" id="GO:0099171">
    <property type="term" value="P:presynaptic modulation of chemical synaptic transmission"/>
    <property type="evidence" value="ECO:0000314"/>
    <property type="project" value="SynGO"/>
</dbReference>
<dbReference type="GO" id="GO:0045188">
    <property type="term" value="P:regulation of circadian sleep/wake cycle, non-REM sleep"/>
    <property type="evidence" value="ECO:0000315"/>
    <property type="project" value="MGI"/>
</dbReference>
<dbReference type="GO" id="GO:0042320">
    <property type="term" value="P:regulation of circadian sleep/wake cycle, REM sleep"/>
    <property type="evidence" value="ECO:0000315"/>
    <property type="project" value="MGI"/>
</dbReference>
<dbReference type="GO" id="GO:0048814">
    <property type="term" value="P:regulation of dendrite morphogenesis"/>
    <property type="evidence" value="ECO:0000315"/>
    <property type="project" value="MGI"/>
</dbReference>
<dbReference type="GO" id="GO:0042053">
    <property type="term" value="P:regulation of dopamine metabolic process"/>
    <property type="evidence" value="ECO:0000315"/>
    <property type="project" value="MGI"/>
</dbReference>
<dbReference type="GO" id="GO:0014059">
    <property type="term" value="P:regulation of dopamine secretion"/>
    <property type="evidence" value="ECO:0000315"/>
    <property type="project" value="MGI"/>
</dbReference>
<dbReference type="GO" id="GO:0042391">
    <property type="term" value="P:regulation of membrane potential"/>
    <property type="evidence" value="ECO:0000315"/>
    <property type="project" value="MGI"/>
</dbReference>
<dbReference type="GO" id="GO:0051963">
    <property type="term" value="P:regulation of synapse assembly"/>
    <property type="evidence" value="ECO:0000315"/>
    <property type="project" value="MGI"/>
</dbReference>
<dbReference type="GO" id="GO:0032225">
    <property type="term" value="P:regulation of synaptic transmission, dopaminergic"/>
    <property type="evidence" value="ECO:0000315"/>
    <property type="project" value="MGI"/>
</dbReference>
<dbReference type="GO" id="GO:0042220">
    <property type="term" value="P:response to cocaine"/>
    <property type="evidence" value="ECO:0000315"/>
    <property type="project" value="MGI"/>
</dbReference>
<dbReference type="GO" id="GO:0045471">
    <property type="term" value="P:response to ethanol"/>
    <property type="evidence" value="ECO:0000315"/>
    <property type="project" value="MGI"/>
</dbReference>
<dbReference type="GO" id="GO:0001666">
    <property type="term" value="P:response to hypoxia"/>
    <property type="evidence" value="ECO:0000315"/>
    <property type="project" value="MGI"/>
</dbReference>
<dbReference type="GO" id="GO:0035094">
    <property type="term" value="P:response to nicotine"/>
    <property type="evidence" value="ECO:0000315"/>
    <property type="project" value="MGI"/>
</dbReference>
<dbReference type="GO" id="GO:0019233">
    <property type="term" value="P:sensory perception of pain"/>
    <property type="evidence" value="ECO:0000315"/>
    <property type="project" value="MGI"/>
</dbReference>
<dbReference type="GO" id="GO:0007605">
    <property type="term" value="P:sensory perception of sound"/>
    <property type="evidence" value="ECO:0000315"/>
    <property type="project" value="MGI"/>
</dbReference>
<dbReference type="GO" id="GO:0006939">
    <property type="term" value="P:smooth muscle contraction"/>
    <property type="evidence" value="ECO:0000316"/>
    <property type="project" value="MGI"/>
</dbReference>
<dbReference type="GO" id="GO:0035176">
    <property type="term" value="P:social behavior"/>
    <property type="evidence" value="ECO:0000315"/>
    <property type="project" value="MGI"/>
</dbReference>
<dbReference type="GO" id="GO:0060084">
    <property type="term" value="P:synaptic transmission involved in micturition"/>
    <property type="evidence" value="ECO:0000316"/>
    <property type="project" value="MGI"/>
</dbReference>
<dbReference type="GO" id="GO:0007271">
    <property type="term" value="P:synaptic transmission, cholinergic"/>
    <property type="evidence" value="ECO:0000250"/>
    <property type="project" value="UniProtKB"/>
</dbReference>
<dbReference type="GO" id="GO:0021562">
    <property type="term" value="P:vestibulocochlear nerve development"/>
    <property type="evidence" value="ECO:0000315"/>
    <property type="project" value="MGI"/>
</dbReference>
<dbReference type="GO" id="GO:0008542">
    <property type="term" value="P:visual learning"/>
    <property type="evidence" value="ECO:0000315"/>
    <property type="project" value="MGI"/>
</dbReference>
<dbReference type="GO" id="GO:0007601">
    <property type="term" value="P:visual perception"/>
    <property type="evidence" value="ECO:0000315"/>
    <property type="project" value="MGI"/>
</dbReference>
<dbReference type="CDD" id="cd19025">
    <property type="entry name" value="LGIC_ECD_nAChR_B2"/>
    <property type="match status" value="1"/>
</dbReference>
<dbReference type="CDD" id="cd19064">
    <property type="entry name" value="LGIC_TM_nAChR"/>
    <property type="match status" value="1"/>
</dbReference>
<dbReference type="FunFam" id="1.20.58.390:FF:000028">
    <property type="entry name" value="Cholinergic receptor nicotinic beta 2 subunit"/>
    <property type="match status" value="1"/>
</dbReference>
<dbReference type="FunFam" id="2.70.170.10:FF:000006">
    <property type="entry name" value="Cholinergic receptor nicotinic beta 2 subunit"/>
    <property type="match status" value="1"/>
</dbReference>
<dbReference type="FunFam" id="1.20.58.390:FF:000008">
    <property type="entry name" value="Cholinergic receptor nicotinic beta 4 subunit"/>
    <property type="match status" value="1"/>
</dbReference>
<dbReference type="Gene3D" id="2.70.170.10">
    <property type="entry name" value="Neurotransmitter-gated ion-channel ligand-binding domain"/>
    <property type="match status" value="1"/>
</dbReference>
<dbReference type="Gene3D" id="1.20.58.390">
    <property type="entry name" value="Neurotransmitter-gated ion-channel transmembrane domain"/>
    <property type="match status" value="2"/>
</dbReference>
<dbReference type="InterPro" id="IPR006202">
    <property type="entry name" value="Neur_chan_lig-bd"/>
</dbReference>
<dbReference type="InterPro" id="IPR036734">
    <property type="entry name" value="Neur_chan_lig-bd_sf"/>
</dbReference>
<dbReference type="InterPro" id="IPR006201">
    <property type="entry name" value="Neur_channel"/>
</dbReference>
<dbReference type="InterPro" id="IPR036719">
    <property type="entry name" value="Neuro-gated_channel_TM_sf"/>
</dbReference>
<dbReference type="InterPro" id="IPR038050">
    <property type="entry name" value="Neuro_actylchol_rec"/>
</dbReference>
<dbReference type="InterPro" id="IPR006029">
    <property type="entry name" value="Neurotrans-gated_channel_TM"/>
</dbReference>
<dbReference type="InterPro" id="IPR018000">
    <property type="entry name" value="Neurotransmitter_ion_chnl_CS"/>
</dbReference>
<dbReference type="InterPro" id="IPR002394">
    <property type="entry name" value="Nicotinic_acetylcholine_rcpt"/>
</dbReference>
<dbReference type="NCBIfam" id="TIGR00860">
    <property type="entry name" value="LIC"/>
    <property type="match status" value="1"/>
</dbReference>
<dbReference type="PANTHER" id="PTHR18945">
    <property type="entry name" value="NEUROTRANSMITTER GATED ION CHANNEL"/>
    <property type="match status" value="1"/>
</dbReference>
<dbReference type="Pfam" id="PF02931">
    <property type="entry name" value="Neur_chan_LBD"/>
    <property type="match status" value="1"/>
</dbReference>
<dbReference type="Pfam" id="PF02932">
    <property type="entry name" value="Neur_chan_memb"/>
    <property type="match status" value="1"/>
</dbReference>
<dbReference type="PRINTS" id="PR00254">
    <property type="entry name" value="NICOTINICR"/>
</dbReference>
<dbReference type="PRINTS" id="PR00252">
    <property type="entry name" value="NRIONCHANNEL"/>
</dbReference>
<dbReference type="SUPFAM" id="SSF90112">
    <property type="entry name" value="Neurotransmitter-gated ion-channel transmembrane pore"/>
    <property type="match status" value="1"/>
</dbReference>
<dbReference type="SUPFAM" id="SSF63712">
    <property type="entry name" value="Nicotinic receptor ligand binding domain-like"/>
    <property type="match status" value="1"/>
</dbReference>
<dbReference type="PROSITE" id="PS00236">
    <property type="entry name" value="NEUROTR_ION_CHANNEL"/>
    <property type="match status" value="1"/>
</dbReference>
<sequence length="501" mass="57113">MARCSNSMALLFSFGLLWLCSGVLGTDTEERLVEHLLDPSRYNKLIRPATNGSELVTVQLMVSLAQLISVHEREQIMTTNVWLTQEWEDYRLTWKPEDFDNMKKVRLPSKHIWLPDVVLYNNADGMYEVSFYSNAVVSYDGSIFWLPPAIYKSACKIEVKHFPFDQQNCTMKFRSWTYDRTEIDLVLKSDVASLDDFTPSGEWDIIALPGRRNENPDDSTYVDITYDFIIRRKPLFYTINLIIPCVLITSLAILVFYLPSDCGEKMTLCISVLLALTVFLLLISKIVPPTSLDVPLVGKYLMFTMVLVTFSIVTSVCVLNVHHRSPTTHTMAPWVKVVFLEKLPTLLFLQQPRHRCARQRLRLRRRQREREGAGTLFFREGPAADPCTCFVNPASMQGLAGAFQAEPAAAGLGRSMGPCSCGLREAVDGVRFIADHMRSEDDDQSVREDWKYVAMVIDRLFLWIFVFVCVFGTIGMFLQPLFQNYTATTFLHSDHSAPSSK</sequence>
<evidence type="ECO:0000250" key="1">
    <source>
        <dbReference type="UniProtKB" id="P04758"/>
    </source>
</evidence>
<evidence type="ECO:0000250" key="2">
    <source>
        <dbReference type="UniProtKB" id="P12390"/>
    </source>
</evidence>
<evidence type="ECO:0000250" key="3">
    <source>
        <dbReference type="UniProtKB" id="P17787"/>
    </source>
</evidence>
<evidence type="ECO:0000255" key="4"/>
<evidence type="ECO:0000305" key="5"/>
<accession>Q9ERK7</accession>
<accession>Q8BGP7</accession>
<comment type="function">
    <text evidence="2 3">Component of neuronal acetylcholine receptors (nAChRs) that function as pentameric, ligand-gated cation channels with high calcium permeability among other activities. nAChRs are excitatory neurotrasnmitter receptors formed by a collection of nAChR subunits known to mediate synaptic transmission in the nervous system and the neuromuscular junction. Each nAchR subunit confers differential attributes to channel properties, including activation, deactivation and desensitization kinetics, pH sensitivity, cation permeability, and binding to allosteric modulators. CHRNB2 forms heteropentameric neuronal acetylcholine receptors with CHRNA2, CHRNA3, CHRNA4 and CHRNA6, as well as CHRNA5 and CHRNB3 as accesory subunits. Found in two major stoichiometric forms,(CHRNA4)3:(CHRNB2)2 and (CHRNA4)2:(CHRNB2)3, the two stoichiometric forms differ in their unitary conductance, calcium permeability, ACh sensitivity and potentiation by divalent cation (By similarity). Heteropentameric channels with CHRNA6 and CHRNA4 exhibit high sensitivity to ACh and nicotine and are predominantly expressed in only a few brain areas, including dopaminergic neurons, norepirephrine neurons and cells of the visual system. nAChrs containing CHRNA6 subunits mediate endogenous cholinergic modulation of dopamine and gamma-aminobutyric acid (GABA) release in response to nicotine at nerve terminals (By similarity). Also forms functional nAChRs with other subunits such as CHRNA7:CHRNB2, mainly expressed in basal forebrain cholinergic neurons (By similarity).</text>
</comment>
<comment type="catalytic activity">
    <reaction evidence="1">
        <text>K(+)(in) = K(+)(out)</text>
        <dbReference type="Rhea" id="RHEA:29463"/>
        <dbReference type="ChEBI" id="CHEBI:29103"/>
    </reaction>
</comment>
<comment type="catalytic activity">
    <reaction evidence="3">
        <text>Na(+)(in) = Na(+)(out)</text>
        <dbReference type="Rhea" id="RHEA:34963"/>
        <dbReference type="ChEBI" id="CHEBI:29101"/>
    </reaction>
</comment>
<comment type="catalytic activity">
    <reaction evidence="3">
        <text>Ca(2+)(in) = Ca(2+)(out)</text>
        <dbReference type="Rhea" id="RHEA:29671"/>
        <dbReference type="ChEBI" id="CHEBI:29108"/>
    </reaction>
</comment>
<comment type="activity regulation">
    <text evidence="3">Activated by a myriad of ligands such as acetylcholine, cytisine, nicotine, choline and epibatidine. Channel potentiation by calcium is stoichiometry-selective, CHRNA4:CHRNB2 nACh receptor is achieved by calcium association with topographically distinct sites framed by anionic residues within the CHRNA4 subunit and between the CHRNA4 and CHRNB2 subunits. Oligomeric amyloid-beta protein 42 activates specifially CHRNA7:CHRNB2 nAchRs. nAChR activity is inhibited by the antagonist alpha-conotoxins BuIA, PnIA, PnIC, GID and MII, small disulfide-constrained peptides from cone snails.</text>
</comment>
<comment type="subunit">
    <text evidence="2 3">Neuronal AChR is a heteropentamer composed of two different types of subunits: alpha and beta. CHRNB2/Beta-2 subunit can be combined to CHRNA2/alpha-2, CHRNA3/alpha-3 or CHRNA4/alpha-4, CHRNA5/alpha-5, CHRNA6/alpha-6 and CHRNB3/beta-3 to give rise to functional receptors. CHRNA2:CHRNB2 and CHRNA4:CHRNB2 nAChR complexes exist in two subtypes: LS (low agonist sensitivity) with a (CHRNA2/4)3:(CHRNB2)2 and HS (high agonist sensitivity) with a (CHRNA2/4)2:(CHRNB2)3 stoichiometry; the subtypes differ in their subunit binding interfaces which are involved in ligand binding. Cells produce predominantly an (CHRNA4)3:(CHRNB2)2 nAChR. The stoichiometric form (CHRNA4)2:(CHRNB2)3 expression is selectively up-regulated by nicotine and has lower single channel conductance and calcium permeability. Also part of the stoichiometric forms: (CHRNA4:CHRNB2)2:CHRNB3 or (CHRNA6:CHRNB2)2:CHRNB3. Can form heteropentamers with CHRNA7, mainly found in basal forebrain cholinergic neurons. Interacts with RIC3; which is required for proper folding and assembly. Interacts with LYPD6.</text>
</comment>
<comment type="subcellular location">
    <subcellularLocation>
        <location evidence="2">Synaptic cell membrane</location>
        <topology evidence="4">Multi-pass membrane protein</topology>
    </subcellularLocation>
    <subcellularLocation>
        <location evidence="3">Cell membrane</location>
        <topology evidence="4">Multi-pass membrane protein</topology>
    </subcellularLocation>
</comment>
<comment type="similarity">
    <text evidence="5">Belongs to the ligand-gated ion channel (TC 1.A.9) family. Acetylcholine receptor (TC 1.A.9.1) subfamily. Beta-2/CHRNB2 sub-subfamily.</text>
</comment>
<reference key="1">
    <citation type="journal article" date="2001" name="Pharmacogenetics">
        <title>Long sleep and short sleep mice differ in nicotine-stimulated 86Rb+ efflux and alpha4 nicotinic receptor subunit cDNA sequence.</title>
        <authorList>
            <person name="Stitzel J.A."/>
            <person name="Dobelis P."/>
            <person name="Jimenez M."/>
            <person name="Collins A.C."/>
        </authorList>
    </citation>
    <scope>NUCLEOTIDE SEQUENCE [MRNA]</scope>
    <source>
        <strain>Long sleep selected line</strain>
    </source>
</reference>
<reference key="2">
    <citation type="submission" date="2004-03" db="EMBL/GenBank/DDBJ databases">
        <authorList>
            <person name="Groot-Kormelink P.J."/>
        </authorList>
    </citation>
    <scope>NUCLEOTIDE SEQUENCE [MRNA]</scope>
    <source>
        <strain>BALB/cJ</strain>
        <tissue>Brain</tissue>
    </source>
</reference>
<reference key="3">
    <citation type="journal article" date="2005" name="Science">
        <title>The transcriptional landscape of the mammalian genome.</title>
        <authorList>
            <person name="Carninci P."/>
            <person name="Kasukawa T."/>
            <person name="Katayama S."/>
            <person name="Gough J."/>
            <person name="Frith M.C."/>
            <person name="Maeda N."/>
            <person name="Oyama R."/>
            <person name="Ravasi T."/>
            <person name="Lenhard B."/>
            <person name="Wells C."/>
            <person name="Kodzius R."/>
            <person name="Shimokawa K."/>
            <person name="Bajic V.B."/>
            <person name="Brenner S.E."/>
            <person name="Batalov S."/>
            <person name="Forrest A.R."/>
            <person name="Zavolan M."/>
            <person name="Davis M.J."/>
            <person name="Wilming L.G."/>
            <person name="Aidinis V."/>
            <person name="Allen J.E."/>
            <person name="Ambesi-Impiombato A."/>
            <person name="Apweiler R."/>
            <person name="Aturaliya R.N."/>
            <person name="Bailey T.L."/>
            <person name="Bansal M."/>
            <person name="Baxter L."/>
            <person name="Beisel K.W."/>
            <person name="Bersano T."/>
            <person name="Bono H."/>
            <person name="Chalk A.M."/>
            <person name="Chiu K.P."/>
            <person name="Choudhary V."/>
            <person name="Christoffels A."/>
            <person name="Clutterbuck D.R."/>
            <person name="Crowe M.L."/>
            <person name="Dalla E."/>
            <person name="Dalrymple B.P."/>
            <person name="de Bono B."/>
            <person name="Della Gatta G."/>
            <person name="di Bernardo D."/>
            <person name="Down T."/>
            <person name="Engstrom P."/>
            <person name="Fagiolini M."/>
            <person name="Faulkner G."/>
            <person name="Fletcher C.F."/>
            <person name="Fukushima T."/>
            <person name="Furuno M."/>
            <person name="Futaki S."/>
            <person name="Gariboldi M."/>
            <person name="Georgii-Hemming P."/>
            <person name="Gingeras T.R."/>
            <person name="Gojobori T."/>
            <person name="Green R.E."/>
            <person name="Gustincich S."/>
            <person name="Harbers M."/>
            <person name="Hayashi Y."/>
            <person name="Hensch T.K."/>
            <person name="Hirokawa N."/>
            <person name="Hill D."/>
            <person name="Huminiecki L."/>
            <person name="Iacono M."/>
            <person name="Ikeo K."/>
            <person name="Iwama A."/>
            <person name="Ishikawa T."/>
            <person name="Jakt M."/>
            <person name="Kanapin A."/>
            <person name="Katoh M."/>
            <person name="Kawasawa Y."/>
            <person name="Kelso J."/>
            <person name="Kitamura H."/>
            <person name="Kitano H."/>
            <person name="Kollias G."/>
            <person name="Krishnan S.P."/>
            <person name="Kruger A."/>
            <person name="Kummerfeld S.K."/>
            <person name="Kurochkin I.V."/>
            <person name="Lareau L.F."/>
            <person name="Lazarevic D."/>
            <person name="Lipovich L."/>
            <person name="Liu J."/>
            <person name="Liuni S."/>
            <person name="McWilliam S."/>
            <person name="Madan Babu M."/>
            <person name="Madera M."/>
            <person name="Marchionni L."/>
            <person name="Matsuda H."/>
            <person name="Matsuzawa S."/>
            <person name="Miki H."/>
            <person name="Mignone F."/>
            <person name="Miyake S."/>
            <person name="Morris K."/>
            <person name="Mottagui-Tabar S."/>
            <person name="Mulder N."/>
            <person name="Nakano N."/>
            <person name="Nakauchi H."/>
            <person name="Ng P."/>
            <person name="Nilsson R."/>
            <person name="Nishiguchi S."/>
            <person name="Nishikawa S."/>
            <person name="Nori F."/>
            <person name="Ohara O."/>
            <person name="Okazaki Y."/>
            <person name="Orlando V."/>
            <person name="Pang K.C."/>
            <person name="Pavan W.J."/>
            <person name="Pavesi G."/>
            <person name="Pesole G."/>
            <person name="Petrovsky N."/>
            <person name="Piazza S."/>
            <person name="Reed J."/>
            <person name="Reid J.F."/>
            <person name="Ring B.Z."/>
            <person name="Ringwald M."/>
            <person name="Rost B."/>
            <person name="Ruan Y."/>
            <person name="Salzberg S.L."/>
            <person name="Sandelin A."/>
            <person name="Schneider C."/>
            <person name="Schoenbach C."/>
            <person name="Sekiguchi K."/>
            <person name="Semple C.A."/>
            <person name="Seno S."/>
            <person name="Sessa L."/>
            <person name="Sheng Y."/>
            <person name="Shibata Y."/>
            <person name="Shimada H."/>
            <person name="Shimada K."/>
            <person name="Silva D."/>
            <person name="Sinclair B."/>
            <person name="Sperling S."/>
            <person name="Stupka E."/>
            <person name="Sugiura K."/>
            <person name="Sultana R."/>
            <person name="Takenaka Y."/>
            <person name="Taki K."/>
            <person name="Tammoja K."/>
            <person name="Tan S.L."/>
            <person name="Tang S."/>
            <person name="Taylor M.S."/>
            <person name="Tegner J."/>
            <person name="Teichmann S.A."/>
            <person name="Ueda H.R."/>
            <person name="van Nimwegen E."/>
            <person name="Verardo R."/>
            <person name="Wei C.L."/>
            <person name="Yagi K."/>
            <person name="Yamanishi H."/>
            <person name="Zabarovsky E."/>
            <person name="Zhu S."/>
            <person name="Zimmer A."/>
            <person name="Hide W."/>
            <person name="Bult C."/>
            <person name="Grimmond S.M."/>
            <person name="Teasdale R.D."/>
            <person name="Liu E.T."/>
            <person name="Brusic V."/>
            <person name="Quackenbush J."/>
            <person name="Wahlestedt C."/>
            <person name="Mattick J.S."/>
            <person name="Hume D.A."/>
            <person name="Kai C."/>
            <person name="Sasaki D."/>
            <person name="Tomaru Y."/>
            <person name="Fukuda S."/>
            <person name="Kanamori-Katayama M."/>
            <person name="Suzuki M."/>
            <person name="Aoki J."/>
            <person name="Arakawa T."/>
            <person name="Iida J."/>
            <person name="Imamura K."/>
            <person name="Itoh M."/>
            <person name="Kato T."/>
            <person name="Kawaji H."/>
            <person name="Kawagashira N."/>
            <person name="Kawashima T."/>
            <person name="Kojima M."/>
            <person name="Kondo S."/>
            <person name="Konno H."/>
            <person name="Nakano K."/>
            <person name="Ninomiya N."/>
            <person name="Nishio T."/>
            <person name="Okada M."/>
            <person name="Plessy C."/>
            <person name="Shibata K."/>
            <person name="Shiraki T."/>
            <person name="Suzuki S."/>
            <person name="Tagami M."/>
            <person name="Waki K."/>
            <person name="Watahiki A."/>
            <person name="Okamura-Oho Y."/>
            <person name="Suzuki H."/>
            <person name="Kawai J."/>
            <person name="Hayashizaki Y."/>
        </authorList>
    </citation>
    <scope>NUCLEOTIDE SEQUENCE [LARGE SCALE MRNA]</scope>
    <source>
        <strain>C57BL/6J</strain>
        <tissue>Spinal cord</tissue>
        <tissue>Spinal ganglion</tissue>
    </source>
</reference>
<reference key="4">
    <citation type="journal article" date="2009" name="PLoS Biol.">
        <title>Lineage-specific biology revealed by a finished genome assembly of the mouse.</title>
        <authorList>
            <person name="Church D.M."/>
            <person name="Goodstadt L."/>
            <person name="Hillier L.W."/>
            <person name="Zody M.C."/>
            <person name="Goldstein S."/>
            <person name="She X."/>
            <person name="Bult C.J."/>
            <person name="Agarwala R."/>
            <person name="Cherry J.L."/>
            <person name="DiCuccio M."/>
            <person name="Hlavina W."/>
            <person name="Kapustin Y."/>
            <person name="Meric P."/>
            <person name="Maglott D."/>
            <person name="Birtle Z."/>
            <person name="Marques A.C."/>
            <person name="Graves T."/>
            <person name="Zhou S."/>
            <person name="Teague B."/>
            <person name="Potamousis K."/>
            <person name="Churas C."/>
            <person name="Place M."/>
            <person name="Herschleb J."/>
            <person name="Runnheim R."/>
            <person name="Forrest D."/>
            <person name="Amos-Landgraf J."/>
            <person name="Schwartz D.C."/>
            <person name="Cheng Z."/>
            <person name="Lindblad-Toh K."/>
            <person name="Eichler E.E."/>
            <person name="Ponting C.P."/>
        </authorList>
    </citation>
    <scope>NUCLEOTIDE SEQUENCE [LARGE SCALE GENOMIC DNA]</scope>
    <source>
        <strain>C57BL/6J</strain>
    </source>
</reference>
<reference key="5">
    <citation type="submission" date="2005-07" db="EMBL/GenBank/DDBJ databases">
        <authorList>
            <person name="Mural R.J."/>
            <person name="Adams M.D."/>
            <person name="Myers E.W."/>
            <person name="Smith H.O."/>
            <person name="Venter J.C."/>
        </authorList>
    </citation>
    <scope>NUCLEOTIDE SEQUENCE [LARGE SCALE GENOMIC DNA]</scope>
</reference>
<reference key="6">
    <citation type="journal article" date="2004" name="Genome Res.">
        <title>The status, quality, and expansion of the NIH full-length cDNA project: the Mammalian Gene Collection (MGC).</title>
        <authorList>
            <consortium name="The MGC Project Team"/>
        </authorList>
    </citation>
    <scope>NUCLEOTIDE SEQUENCE [LARGE SCALE MRNA]</scope>
    <source>
        <strain>C57BL/6J</strain>
        <tissue>Brain</tissue>
    </source>
</reference>